<name>Y949_METPE</name>
<organism>
    <name type="scientific">Methanosphaerula palustris (strain ATCC BAA-1556 / DSM 19958 / E1-9c)</name>
    <dbReference type="NCBI Taxonomy" id="521011"/>
    <lineage>
        <taxon>Archaea</taxon>
        <taxon>Methanobacteriati</taxon>
        <taxon>Methanobacteriota</taxon>
        <taxon>Stenosarchaea group</taxon>
        <taxon>Methanomicrobia</taxon>
        <taxon>Methanomicrobiales</taxon>
        <taxon>Methanoregulaceae</taxon>
        <taxon>Methanosphaerula</taxon>
    </lineage>
</organism>
<dbReference type="EMBL" id="CP001338">
    <property type="protein sequence ID" value="ACL16301.1"/>
    <property type="molecule type" value="Genomic_DNA"/>
</dbReference>
<dbReference type="RefSeq" id="WP_012617620.1">
    <property type="nucleotide sequence ID" value="NC_011832.1"/>
</dbReference>
<dbReference type="STRING" id="521011.Mpal_0949"/>
<dbReference type="GeneID" id="7272442"/>
<dbReference type="KEGG" id="mpl:Mpal_0949"/>
<dbReference type="eggNOG" id="arCOG04477">
    <property type="taxonomic scope" value="Archaea"/>
</dbReference>
<dbReference type="HOGENOM" id="CLU_121764_0_0_2"/>
<dbReference type="OrthoDB" id="24613at2157"/>
<dbReference type="Proteomes" id="UP000002457">
    <property type="component" value="Chromosome"/>
</dbReference>
<dbReference type="HAMAP" id="MF_00498">
    <property type="entry name" value="UPF0179"/>
    <property type="match status" value="1"/>
</dbReference>
<dbReference type="InterPro" id="IPR005369">
    <property type="entry name" value="UPF0179"/>
</dbReference>
<dbReference type="PANTHER" id="PTHR40699">
    <property type="entry name" value="UPF0179 PROTEIN MJ1627"/>
    <property type="match status" value="1"/>
</dbReference>
<dbReference type="PANTHER" id="PTHR40699:SF1">
    <property type="entry name" value="UPF0179 PROTEIN MJ1627"/>
    <property type="match status" value="1"/>
</dbReference>
<dbReference type="Pfam" id="PF03684">
    <property type="entry name" value="UPF0179"/>
    <property type="match status" value="1"/>
</dbReference>
<sequence length="148" mass="16022">MAEIKSKVTLIGAMLARPGLEFIYEGELPACEQCKVRKACNNLKVGRKYRVLSIRATVHGCSVHLNGACAVEIVESPMVGLIKADLAIANSRILPDLSCTQSECKSYPLCHPDGVVSGERYMVSEVLGNAPDHCDKGRSLKLVELLPI</sequence>
<gene>
    <name type="ordered locus">Mpal_0949</name>
</gene>
<feature type="chain" id="PRO_0000378131" description="UPF0179 protein Mpal_0949">
    <location>
        <begin position="1"/>
        <end position="148"/>
    </location>
</feature>
<evidence type="ECO:0000255" key="1">
    <source>
        <dbReference type="HAMAP-Rule" id="MF_00498"/>
    </source>
</evidence>
<keyword id="KW-1185">Reference proteome</keyword>
<accession>B8GGP6</accession>
<comment type="similarity">
    <text evidence="1">Belongs to the UPF0179 family.</text>
</comment>
<proteinExistence type="inferred from homology"/>
<reference key="1">
    <citation type="journal article" date="2015" name="Genome Announc.">
        <title>Complete Genome Sequence of Methanosphaerula palustris E1-9CT, a Hydrogenotrophic Methanogen Isolated from a Minerotrophic Fen Peatland.</title>
        <authorList>
            <person name="Cadillo-Quiroz H."/>
            <person name="Browne P."/>
            <person name="Kyrpides N."/>
            <person name="Woyke T."/>
            <person name="Goodwin L."/>
            <person name="Detter C."/>
            <person name="Yavitt J.B."/>
            <person name="Zinder S.H."/>
        </authorList>
    </citation>
    <scope>NUCLEOTIDE SEQUENCE [LARGE SCALE GENOMIC DNA]</scope>
    <source>
        <strain>ATCC BAA-1556 / DSM 19958 / E1-9c</strain>
    </source>
</reference>
<protein>
    <recommendedName>
        <fullName evidence="1">UPF0179 protein Mpal_0949</fullName>
    </recommendedName>
</protein>